<dbReference type="EMBL" id="CU329670">
    <property type="protein sequence ID" value="CAA94626.1"/>
    <property type="molecule type" value="Genomic_DNA"/>
</dbReference>
<dbReference type="PIR" id="T38079">
    <property type="entry name" value="T38079"/>
</dbReference>
<dbReference type="RefSeq" id="NP_593011.1">
    <property type="nucleotide sequence ID" value="NM_001018410.1"/>
</dbReference>
<dbReference type="BioGRID" id="277936">
    <property type="interactions" value="3"/>
</dbReference>
<dbReference type="PaxDb" id="4896-SPAC1F3.08c.1"/>
<dbReference type="EnsemblFungi" id="SPAC1F3.08c.1">
    <property type="protein sequence ID" value="SPAC1F3.08c.1:pep"/>
    <property type="gene ID" value="SPAC1F3.08c"/>
</dbReference>
<dbReference type="KEGG" id="spo:2541431"/>
<dbReference type="PomBase" id="SPAC1F3.08c"/>
<dbReference type="VEuPathDB" id="FungiDB:SPAC1F3.08c"/>
<dbReference type="HOGENOM" id="CLU_2198512_0_0_1"/>
<dbReference type="InParanoid" id="Q10413"/>
<dbReference type="PRO" id="PR:Q10413"/>
<dbReference type="Proteomes" id="UP000002485">
    <property type="component" value="Chromosome I"/>
</dbReference>
<dbReference type="GO" id="GO:0016020">
    <property type="term" value="C:membrane"/>
    <property type="evidence" value="ECO:0007669"/>
    <property type="project" value="UniProtKB-SubCell"/>
</dbReference>
<sequence length="108" mass="13298">MVIYCNWLELKGLLETNDFLYLMRCCYMYDTVSLVSNAPNIYSIPFFYDRICYDYKNILLKYELFIIYYYYYLLICLSPHFFPIKRIRPFHENPLHSFVYRIMISSEA</sequence>
<feature type="chain" id="PRO_0000116598" description="Uncharacterized protein C1F3.08c">
    <location>
        <begin position="1"/>
        <end position="108"/>
    </location>
</feature>
<feature type="transmembrane region" description="Helical" evidence="1">
    <location>
        <begin position="64"/>
        <end position="84"/>
    </location>
</feature>
<protein>
    <recommendedName>
        <fullName>Uncharacterized protein C1F3.08c</fullName>
    </recommendedName>
</protein>
<evidence type="ECO:0000255" key="1"/>
<evidence type="ECO:0000305" key="2"/>
<name>YD88_SCHPO</name>
<proteinExistence type="predicted"/>
<gene>
    <name type="ORF">SPAC1F3.08c</name>
</gene>
<comment type="subcellular location">
    <subcellularLocation>
        <location evidence="2">Membrane</location>
        <topology evidence="2">Single-pass membrane protein</topology>
    </subcellularLocation>
</comment>
<accession>Q10413</accession>
<reference key="1">
    <citation type="journal article" date="2002" name="Nature">
        <title>The genome sequence of Schizosaccharomyces pombe.</title>
        <authorList>
            <person name="Wood V."/>
            <person name="Gwilliam R."/>
            <person name="Rajandream M.A."/>
            <person name="Lyne M.H."/>
            <person name="Lyne R."/>
            <person name="Stewart A."/>
            <person name="Sgouros J.G."/>
            <person name="Peat N."/>
            <person name="Hayles J."/>
            <person name="Baker S.G."/>
            <person name="Basham D."/>
            <person name="Bowman S."/>
            <person name="Brooks K."/>
            <person name="Brown D."/>
            <person name="Brown S."/>
            <person name="Chillingworth T."/>
            <person name="Churcher C.M."/>
            <person name="Collins M."/>
            <person name="Connor R."/>
            <person name="Cronin A."/>
            <person name="Davis P."/>
            <person name="Feltwell T."/>
            <person name="Fraser A."/>
            <person name="Gentles S."/>
            <person name="Goble A."/>
            <person name="Hamlin N."/>
            <person name="Harris D.E."/>
            <person name="Hidalgo J."/>
            <person name="Hodgson G."/>
            <person name="Holroyd S."/>
            <person name="Hornsby T."/>
            <person name="Howarth S."/>
            <person name="Huckle E.J."/>
            <person name="Hunt S."/>
            <person name="Jagels K."/>
            <person name="James K.D."/>
            <person name="Jones L."/>
            <person name="Jones M."/>
            <person name="Leather S."/>
            <person name="McDonald S."/>
            <person name="McLean J."/>
            <person name="Mooney P."/>
            <person name="Moule S."/>
            <person name="Mungall K.L."/>
            <person name="Murphy L.D."/>
            <person name="Niblett D."/>
            <person name="Odell C."/>
            <person name="Oliver K."/>
            <person name="O'Neil S."/>
            <person name="Pearson D."/>
            <person name="Quail M.A."/>
            <person name="Rabbinowitsch E."/>
            <person name="Rutherford K.M."/>
            <person name="Rutter S."/>
            <person name="Saunders D."/>
            <person name="Seeger K."/>
            <person name="Sharp S."/>
            <person name="Skelton J."/>
            <person name="Simmonds M.N."/>
            <person name="Squares R."/>
            <person name="Squares S."/>
            <person name="Stevens K."/>
            <person name="Taylor K."/>
            <person name="Taylor R.G."/>
            <person name="Tivey A."/>
            <person name="Walsh S.V."/>
            <person name="Warren T."/>
            <person name="Whitehead S."/>
            <person name="Woodward J.R."/>
            <person name="Volckaert G."/>
            <person name="Aert R."/>
            <person name="Robben J."/>
            <person name="Grymonprez B."/>
            <person name="Weltjens I."/>
            <person name="Vanstreels E."/>
            <person name="Rieger M."/>
            <person name="Schaefer M."/>
            <person name="Mueller-Auer S."/>
            <person name="Gabel C."/>
            <person name="Fuchs M."/>
            <person name="Duesterhoeft A."/>
            <person name="Fritzc C."/>
            <person name="Holzer E."/>
            <person name="Moestl D."/>
            <person name="Hilbert H."/>
            <person name="Borzym K."/>
            <person name="Langer I."/>
            <person name="Beck A."/>
            <person name="Lehrach H."/>
            <person name="Reinhardt R."/>
            <person name="Pohl T.M."/>
            <person name="Eger P."/>
            <person name="Zimmermann W."/>
            <person name="Wedler H."/>
            <person name="Wambutt R."/>
            <person name="Purnelle B."/>
            <person name="Goffeau A."/>
            <person name="Cadieu E."/>
            <person name="Dreano S."/>
            <person name="Gloux S."/>
            <person name="Lelaure V."/>
            <person name="Mottier S."/>
            <person name="Galibert F."/>
            <person name="Aves S.J."/>
            <person name="Xiang Z."/>
            <person name="Hunt C."/>
            <person name="Moore K."/>
            <person name="Hurst S.M."/>
            <person name="Lucas M."/>
            <person name="Rochet M."/>
            <person name="Gaillardin C."/>
            <person name="Tallada V.A."/>
            <person name="Garzon A."/>
            <person name="Thode G."/>
            <person name="Daga R.R."/>
            <person name="Cruzado L."/>
            <person name="Jimenez J."/>
            <person name="Sanchez M."/>
            <person name="del Rey F."/>
            <person name="Benito J."/>
            <person name="Dominguez A."/>
            <person name="Revuelta J.L."/>
            <person name="Moreno S."/>
            <person name="Armstrong J."/>
            <person name="Forsburg S.L."/>
            <person name="Cerutti L."/>
            <person name="Lowe T."/>
            <person name="McCombie W.R."/>
            <person name="Paulsen I."/>
            <person name="Potashkin J."/>
            <person name="Shpakovski G.V."/>
            <person name="Ussery D."/>
            <person name="Barrell B.G."/>
            <person name="Nurse P."/>
        </authorList>
    </citation>
    <scope>NUCLEOTIDE SEQUENCE [LARGE SCALE GENOMIC DNA]</scope>
    <source>
        <strain>972 / ATCC 24843</strain>
    </source>
</reference>
<keyword id="KW-0472">Membrane</keyword>
<keyword id="KW-1185">Reference proteome</keyword>
<keyword id="KW-0812">Transmembrane</keyword>
<keyword id="KW-1133">Transmembrane helix</keyword>
<organism>
    <name type="scientific">Schizosaccharomyces pombe (strain 972 / ATCC 24843)</name>
    <name type="common">Fission yeast</name>
    <dbReference type="NCBI Taxonomy" id="284812"/>
    <lineage>
        <taxon>Eukaryota</taxon>
        <taxon>Fungi</taxon>
        <taxon>Dikarya</taxon>
        <taxon>Ascomycota</taxon>
        <taxon>Taphrinomycotina</taxon>
        <taxon>Schizosaccharomycetes</taxon>
        <taxon>Schizosaccharomycetales</taxon>
        <taxon>Schizosaccharomycetaceae</taxon>
        <taxon>Schizosaccharomyces</taxon>
    </lineage>
</organism>